<protein>
    <recommendedName>
        <fullName evidence="1">Mlc titration factor A</fullName>
    </recommendedName>
    <alternativeName>
        <fullName evidence="1">Probable zinc metallopeptidase MtfA</fullName>
        <ecNumber evidence="1">3.4.11.-</ecNumber>
    </alternativeName>
</protein>
<dbReference type="EC" id="3.4.11.-" evidence="1"/>
<dbReference type="EMBL" id="CP000970">
    <property type="protein sequence ID" value="ACB17817.1"/>
    <property type="molecule type" value="Genomic_DNA"/>
</dbReference>
<dbReference type="RefSeq" id="WP_012311782.1">
    <property type="nucleotide sequence ID" value="NC_010498.1"/>
</dbReference>
<dbReference type="SMR" id="B1LPW8"/>
<dbReference type="MEROPS" id="M90.001"/>
<dbReference type="KEGG" id="ecm:EcSMS35_1148"/>
<dbReference type="HOGENOM" id="CLU_063037_2_0_6"/>
<dbReference type="Proteomes" id="UP000007011">
    <property type="component" value="Chromosome"/>
</dbReference>
<dbReference type="GO" id="GO:0005829">
    <property type="term" value="C:cytosol"/>
    <property type="evidence" value="ECO:0007669"/>
    <property type="project" value="TreeGrafter"/>
</dbReference>
<dbReference type="GO" id="GO:0004177">
    <property type="term" value="F:aminopeptidase activity"/>
    <property type="evidence" value="ECO:0007669"/>
    <property type="project" value="UniProtKB-UniRule"/>
</dbReference>
<dbReference type="GO" id="GO:0008237">
    <property type="term" value="F:metallopeptidase activity"/>
    <property type="evidence" value="ECO:0007669"/>
    <property type="project" value="UniProtKB-UniRule"/>
</dbReference>
<dbReference type="GO" id="GO:0008270">
    <property type="term" value="F:zinc ion binding"/>
    <property type="evidence" value="ECO:0007669"/>
    <property type="project" value="UniProtKB-UniRule"/>
</dbReference>
<dbReference type="GO" id="GO:0006508">
    <property type="term" value="P:proteolysis"/>
    <property type="evidence" value="ECO:0007669"/>
    <property type="project" value="UniProtKB-KW"/>
</dbReference>
<dbReference type="CDD" id="cd20169">
    <property type="entry name" value="Peptidase_M90_mtfA"/>
    <property type="match status" value="1"/>
</dbReference>
<dbReference type="FunFam" id="1.10.472.150:FF:000001">
    <property type="entry name" value="Protein MtfA"/>
    <property type="match status" value="1"/>
</dbReference>
<dbReference type="FunFam" id="3.40.390.10:FF:000012">
    <property type="entry name" value="Protein MtfA"/>
    <property type="match status" value="1"/>
</dbReference>
<dbReference type="Gene3D" id="3.40.390.10">
    <property type="entry name" value="Collagenase (Catalytic Domain)"/>
    <property type="match status" value="1"/>
</dbReference>
<dbReference type="Gene3D" id="1.10.472.150">
    <property type="entry name" value="Glucose-regulated metallo-peptidase M90, N-terminal domain"/>
    <property type="match status" value="1"/>
</dbReference>
<dbReference type="HAMAP" id="MF_01593">
    <property type="entry name" value="MtfA"/>
    <property type="match status" value="1"/>
</dbReference>
<dbReference type="InterPro" id="IPR024079">
    <property type="entry name" value="MetalloPept_cat_dom_sf"/>
</dbReference>
<dbReference type="InterPro" id="IPR057256">
    <property type="entry name" value="MtfA_enterob"/>
</dbReference>
<dbReference type="InterPro" id="IPR010384">
    <property type="entry name" value="MtfA_fam"/>
</dbReference>
<dbReference type="InterPro" id="IPR042252">
    <property type="entry name" value="MtfA_N"/>
</dbReference>
<dbReference type="NCBIfam" id="NF011939">
    <property type="entry name" value="PRK15410.1"/>
    <property type="match status" value="1"/>
</dbReference>
<dbReference type="PANTHER" id="PTHR30164">
    <property type="entry name" value="MTFA PEPTIDASE"/>
    <property type="match status" value="1"/>
</dbReference>
<dbReference type="PANTHER" id="PTHR30164:SF2">
    <property type="entry name" value="PROTEIN MTFA"/>
    <property type="match status" value="1"/>
</dbReference>
<dbReference type="Pfam" id="PF06167">
    <property type="entry name" value="Peptidase_M90"/>
    <property type="match status" value="1"/>
</dbReference>
<dbReference type="SUPFAM" id="SSF55486">
    <property type="entry name" value="Metalloproteases ('zincins'), catalytic domain"/>
    <property type="match status" value="1"/>
</dbReference>
<comment type="function">
    <text evidence="1">Involved in the modulation of the activity of the glucose-phosphotransferase system (glucose-PTS). Interacts with the transcriptional repressor Mlc, preventing its interaction with DNA and leading to the modulation of expression of genes regulated by Mlc, including ptsG, which encodes the PTS system glucose-specific EIICB component.</text>
</comment>
<comment type="function">
    <text evidence="1">Shows zinc-dependent metallopeptidase activity.</text>
</comment>
<comment type="cofactor">
    <cofactor evidence="1">
        <name>Zn(2+)</name>
        <dbReference type="ChEBI" id="CHEBI:29105"/>
    </cofactor>
    <text evidence="1">Binds 1 zinc ion per subunit.</text>
</comment>
<comment type="subunit">
    <text evidence="1">Interacts with Mlc.</text>
</comment>
<comment type="subcellular location">
    <subcellularLocation>
        <location evidence="1">Cytoplasm</location>
    </subcellularLocation>
</comment>
<comment type="similarity">
    <text evidence="1">Belongs to the MtfA family.</text>
</comment>
<organism>
    <name type="scientific">Escherichia coli (strain SMS-3-5 / SECEC)</name>
    <dbReference type="NCBI Taxonomy" id="439855"/>
    <lineage>
        <taxon>Bacteria</taxon>
        <taxon>Pseudomonadati</taxon>
        <taxon>Pseudomonadota</taxon>
        <taxon>Gammaproteobacteria</taxon>
        <taxon>Enterobacterales</taxon>
        <taxon>Enterobacteriaceae</taxon>
        <taxon>Escherichia</taxon>
    </lineage>
</organism>
<sequence>MIKWPWKVQESAHQTALPWQEALSIPLLTCLTEQEQSKLVTLAERFLQQKRLVPLQGFELDSLRSCRIALLFCLPVLELGLEWLDGFHEVLIYPAPFVVDDEWEDDIGLVHNQRIVQSGQSWQQGPIVLNWLDIQDSFDASGFNLIIHEVAHKLDTRNGDRASGVPFIPLREVAGWEHDLHAAMNNIQEEIELVGDNAASIDAYAASDPAECFAVLSEYFFSAPELFAPRFPSLWQRFCQFYQQDPLQRLHRTNDTDSFSATNVH</sequence>
<proteinExistence type="inferred from homology"/>
<name>MTFA_ECOSM</name>
<gene>
    <name evidence="1" type="primary">mtfA</name>
    <name type="ordered locus">EcSMS35_1148</name>
</gene>
<keyword id="KW-0031">Aminopeptidase</keyword>
<keyword id="KW-0963">Cytoplasm</keyword>
<keyword id="KW-0378">Hydrolase</keyword>
<keyword id="KW-0479">Metal-binding</keyword>
<keyword id="KW-0482">Metalloprotease</keyword>
<keyword id="KW-0645">Protease</keyword>
<keyword id="KW-0862">Zinc</keyword>
<feature type="chain" id="PRO_1000147839" description="Mlc titration factor A">
    <location>
        <begin position="1"/>
        <end position="265"/>
    </location>
</feature>
<feature type="binding site" evidence="1">
    <location>
        <position position="111"/>
    </location>
    <ligand>
        <name>Zn(2+)</name>
        <dbReference type="ChEBI" id="CHEBI:29105"/>
    </ligand>
</feature>
<feature type="binding site" evidence="1">
    <location>
        <position position="148"/>
    </location>
    <ligand>
        <name>Zn(2+)</name>
        <dbReference type="ChEBI" id="CHEBI:29105"/>
    </ligand>
</feature>
<feature type="binding site" evidence="1">
    <location>
        <position position="152"/>
    </location>
    <ligand>
        <name>Zn(2+)</name>
        <dbReference type="ChEBI" id="CHEBI:29105"/>
    </ligand>
</feature>
<feature type="binding site" evidence="1">
    <location>
        <position position="211"/>
    </location>
    <ligand>
        <name>Zn(2+)</name>
        <dbReference type="ChEBI" id="CHEBI:29105"/>
    </ligand>
</feature>
<evidence type="ECO:0000255" key="1">
    <source>
        <dbReference type="HAMAP-Rule" id="MF_01593"/>
    </source>
</evidence>
<reference key="1">
    <citation type="journal article" date="2008" name="J. Bacteriol.">
        <title>Insights into the environmental resistance gene pool from the genome sequence of the multidrug-resistant environmental isolate Escherichia coli SMS-3-5.</title>
        <authorList>
            <person name="Fricke W.F."/>
            <person name="Wright M.S."/>
            <person name="Lindell A.H."/>
            <person name="Harkins D.M."/>
            <person name="Baker-Austin C."/>
            <person name="Ravel J."/>
            <person name="Stepanauskas R."/>
        </authorList>
    </citation>
    <scope>NUCLEOTIDE SEQUENCE [LARGE SCALE GENOMIC DNA]</scope>
    <source>
        <strain>SMS-3-5 / SECEC</strain>
    </source>
</reference>
<accession>B1LPW8</accession>